<dbReference type="EC" id="4.1.1.11" evidence="1 3"/>
<dbReference type="EC" id="4.1.1.25" evidence="1 2"/>
<dbReference type="EMBL" id="L77117">
    <property type="protein sequence ID" value="AAB98031.1"/>
    <property type="molecule type" value="Genomic_DNA"/>
</dbReference>
<dbReference type="PIR" id="B64306">
    <property type="entry name" value="B64306"/>
</dbReference>
<dbReference type="PDB" id="3F9T">
    <property type="method" value="X-ray"/>
    <property type="resolution" value="2.11 A"/>
    <property type="chains" value="A/B=1-396"/>
</dbReference>
<dbReference type="PDB" id="6JY1">
    <property type="method" value="X-ray"/>
    <property type="resolution" value="1.72 A"/>
    <property type="chains" value="A=1-396"/>
</dbReference>
<dbReference type="PDB" id="6LDR">
    <property type="method" value="X-ray"/>
    <property type="resolution" value="1.79 A"/>
    <property type="chains" value="A=1-396"/>
</dbReference>
<dbReference type="PDB" id="6LDS">
    <property type="method" value="X-ray"/>
    <property type="resolution" value="1.80 A"/>
    <property type="chains" value="A=1-396"/>
</dbReference>
<dbReference type="PDB" id="6LDT">
    <property type="method" value="X-ray"/>
    <property type="resolution" value="1.93 A"/>
    <property type="chains" value="A=1-396"/>
</dbReference>
<dbReference type="PDB" id="6M4Y">
    <property type="method" value="X-ray"/>
    <property type="resolution" value="2.10 A"/>
    <property type="chains" value="A=1-396"/>
</dbReference>
<dbReference type="PDBsum" id="3F9T"/>
<dbReference type="PDBsum" id="6JY1"/>
<dbReference type="PDBsum" id="6LDR"/>
<dbReference type="PDBsum" id="6LDS"/>
<dbReference type="PDBsum" id="6LDT"/>
<dbReference type="PDBsum" id="6M4Y"/>
<dbReference type="SMR" id="Q60358"/>
<dbReference type="FunCoup" id="Q60358">
    <property type="interactions" value="200"/>
</dbReference>
<dbReference type="STRING" id="243232.MJ_0050"/>
<dbReference type="PaxDb" id="243232-MJ_0050"/>
<dbReference type="EnsemblBacteria" id="AAB98031">
    <property type="protein sequence ID" value="AAB98031"/>
    <property type="gene ID" value="MJ_0050"/>
</dbReference>
<dbReference type="KEGG" id="mja:MJ_0050"/>
<dbReference type="eggNOG" id="arCOG00027">
    <property type="taxonomic scope" value="Archaea"/>
</dbReference>
<dbReference type="HOGENOM" id="CLU_028929_2_1_2"/>
<dbReference type="InParanoid" id="Q60358"/>
<dbReference type="PhylomeDB" id="Q60358"/>
<dbReference type="BioCyc" id="MetaCyc:MONOMER-12228"/>
<dbReference type="BRENDA" id="4.1.1.11">
    <property type="organism ID" value="3260"/>
</dbReference>
<dbReference type="BRENDA" id="4.1.1.25">
    <property type="organism ID" value="3260"/>
</dbReference>
<dbReference type="UniPathway" id="UPA00080"/>
<dbReference type="UniPathway" id="UPA00241"/>
<dbReference type="EvolutionaryTrace" id="Q60358"/>
<dbReference type="Proteomes" id="UP000000805">
    <property type="component" value="Chromosome"/>
</dbReference>
<dbReference type="GO" id="GO:0004068">
    <property type="term" value="F:aspartate 1-decarboxylase activity"/>
    <property type="evidence" value="ECO:0000314"/>
    <property type="project" value="UniProtKB"/>
</dbReference>
<dbReference type="GO" id="GO:0030170">
    <property type="term" value="F:pyridoxal phosphate binding"/>
    <property type="evidence" value="ECO:0000314"/>
    <property type="project" value="UniProtKB"/>
</dbReference>
<dbReference type="GO" id="GO:0004837">
    <property type="term" value="F:tyrosine decarboxylase activity"/>
    <property type="evidence" value="ECO:0000314"/>
    <property type="project" value="UniProtKB"/>
</dbReference>
<dbReference type="GO" id="GO:0019752">
    <property type="term" value="P:carboxylic acid metabolic process"/>
    <property type="evidence" value="ECO:0007669"/>
    <property type="project" value="InterPro"/>
</dbReference>
<dbReference type="GO" id="GO:0015937">
    <property type="term" value="P:coenzyme A biosynthetic process"/>
    <property type="evidence" value="ECO:0000318"/>
    <property type="project" value="GO_Central"/>
</dbReference>
<dbReference type="GO" id="GO:2001120">
    <property type="term" value="P:methanofuran biosynthetic process"/>
    <property type="evidence" value="ECO:0000304"/>
    <property type="project" value="UniProtKB"/>
</dbReference>
<dbReference type="Gene3D" id="3.90.1150.10">
    <property type="entry name" value="Aspartate Aminotransferase, domain 1"/>
    <property type="match status" value="1"/>
</dbReference>
<dbReference type="Gene3D" id="3.40.640.10">
    <property type="entry name" value="Type I PLP-dependent aspartate aminotransferase-like (Major domain)"/>
    <property type="match status" value="1"/>
</dbReference>
<dbReference type="HAMAP" id="MF_01610">
    <property type="entry name" value="MfnA_decarbox"/>
    <property type="match status" value="1"/>
</dbReference>
<dbReference type="InterPro" id="IPR050477">
    <property type="entry name" value="GrpII_AminoAcid_Decarb"/>
</dbReference>
<dbReference type="InterPro" id="IPR020931">
    <property type="entry name" value="MfnA"/>
</dbReference>
<dbReference type="InterPro" id="IPR002129">
    <property type="entry name" value="PyrdxlP-dep_de-COase"/>
</dbReference>
<dbReference type="InterPro" id="IPR015424">
    <property type="entry name" value="PyrdxlP-dep_Trfase"/>
</dbReference>
<dbReference type="InterPro" id="IPR015421">
    <property type="entry name" value="PyrdxlP-dep_Trfase_major"/>
</dbReference>
<dbReference type="InterPro" id="IPR015422">
    <property type="entry name" value="PyrdxlP-dep_Trfase_small"/>
</dbReference>
<dbReference type="NCBIfam" id="TIGR03812">
    <property type="entry name" value="tyr_de_CO2_Arch"/>
    <property type="match status" value="1"/>
</dbReference>
<dbReference type="PANTHER" id="PTHR42735">
    <property type="match status" value="1"/>
</dbReference>
<dbReference type="PANTHER" id="PTHR42735:SF6">
    <property type="entry name" value="SPHINGOSINE-1-PHOSPHATE LYASE 1"/>
    <property type="match status" value="1"/>
</dbReference>
<dbReference type="Pfam" id="PF00282">
    <property type="entry name" value="Pyridoxal_deC"/>
    <property type="match status" value="1"/>
</dbReference>
<dbReference type="SUPFAM" id="SSF53383">
    <property type="entry name" value="PLP-dependent transferases"/>
    <property type="match status" value="1"/>
</dbReference>
<protein>
    <recommendedName>
        <fullName evidence="6">L-tyrosine/L-aspartate decarboxylase</fullName>
        <shortName evidence="1 6">TDC/ADC</shortName>
        <ecNumber evidence="1 3">4.1.1.11</ecNumber>
        <ecNumber evidence="1 2">4.1.1.25</ecNumber>
    </recommendedName>
</protein>
<sequence length="396" mass="45050">MRNMQEKGVSEKEILEELKKYRSLDLKYEDGNIFGSMCSNVLPITRKIVDIFLETNLGDPGLFKGTKLLEEKAVALLGSLLNNKDAYGHIVSGGTEANLMALRCIKNIWREKRRKGLSKNEHPKIIVPITAHFSFEKGREMMDLEYIYAPIKEDYTIDEKFVKDAVEDYDVDGIIGIAGTTELGTIDNIEELSKIAKENNIYIHVDAAFGGLVIPFLDDKYKKKGVNYKFDFSLGVDSITIDPHKMGHCPIPSGGILFKDIGYKRYLDVDAPYLTETRQATILGTRVGFGGACTYAVLRYLGREGQRKIVNECMENTLYLYKKLKENNFKPVIEPILNIVAIEDEDYKEVCKKLRDRGIYVSVCNCVKALRIVVMPHIKREHIDNFIEILNSIKRD</sequence>
<gene>
    <name evidence="1 5" type="primary">mfnA</name>
    <name type="ordered locus">MJ0050</name>
</gene>
<proteinExistence type="evidence at protein level"/>
<reference key="1">
    <citation type="journal article" date="1996" name="Science">
        <title>Complete genome sequence of the methanogenic archaeon, Methanococcus jannaschii.</title>
        <authorList>
            <person name="Bult C.J."/>
            <person name="White O."/>
            <person name="Olsen G.J."/>
            <person name="Zhou L."/>
            <person name="Fleischmann R.D."/>
            <person name="Sutton G.G."/>
            <person name="Blake J.A."/>
            <person name="FitzGerald L.M."/>
            <person name="Clayton R.A."/>
            <person name="Gocayne J.D."/>
            <person name="Kerlavage A.R."/>
            <person name="Dougherty B.A."/>
            <person name="Tomb J.-F."/>
            <person name="Adams M.D."/>
            <person name="Reich C.I."/>
            <person name="Overbeek R."/>
            <person name="Kirkness E.F."/>
            <person name="Weinstock K.G."/>
            <person name="Merrick J.M."/>
            <person name="Glodek A."/>
            <person name="Scott J.L."/>
            <person name="Geoghagen N.S.M."/>
            <person name="Weidman J.F."/>
            <person name="Fuhrmann J.L."/>
            <person name="Nguyen D."/>
            <person name="Utterback T.R."/>
            <person name="Kelley J.M."/>
            <person name="Peterson J.D."/>
            <person name="Sadow P.W."/>
            <person name="Hanna M.C."/>
            <person name="Cotton M.D."/>
            <person name="Roberts K.M."/>
            <person name="Hurst M.A."/>
            <person name="Kaine B.P."/>
            <person name="Borodovsky M."/>
            <person name="Klenk H.-P."/>
            <person name="Fraser C.M."/>
            <person name="Smith H.O."/>
            <person name="Woese C.R."/>
            <person name="Venter J.C."/>
        </authorList>
    </citation>
    <scope>NUCLEOTIDE SEQUENCE [LARGE SCALE GENOMIC DNA]</scope>
    <source>
        <strain>ATCC 43067 / DSM 2661 / JAL-1 / JCM 10045 / NBRC 100440</strain>
    </source>
</reference>
<reference key="2">
    <citation type="journal article" date="2005" name="Biochim. Biophys. Acta">
        <title>Identification and characterization of a L-tyrosine decarboxylase in Methanocaldococcus jannaschii.</title>
        <authorList>
            <person name="Kezmarsky N.D."/>
            <person name="Xu H."/>
            <person name="Graham D.E."/>
            <person name="White R.H."/>
        </authorList>
    </citation>
    <scope>FUNCTION AS A TYROSINE DECARBOXYLASE</scope>
    <scope>CATALYTIC ACTIVITY</scope>
    <scope>COFACTOR</scope>
    <scope>ACTIVITY REGULATION</scope>
    <scope>BIOPHYSICOCHEMICAL PROPERTIES</scope>
    <scope>PATHWAY</scope>
    <scope>SUBUNIT</scope>
    <source>
        <strain>ATCC 43067 / DSM 2661 / JAL-1 / JCM 10045 / NBRC 100440</strain>
    </source>
</reference>
<reference key="3">
    <citation type="journal article" date="2014" name="J. Bacteriol.">
        <title>Beta-alanine biosynthesis in Methanocaldococcus jannaschii.</title>
        <authorList>
            <person name="Wang Y."/>
            <person name="Xu H."/>
            <person name="White R.H."/>
        </authorList>
    </citation>
    <scope>FUNCTION AS AN ASPARTATE DECARBOXYLASE</scope>
    <scope>CATALYTIC ACTIVITY</scope>
    <scope>BIOPHYSICOCHEMICAL PROPERTIES</scope>
    <scope>PATHWAY</scope>
</reference>
<reference evidence="7" key="4">
    <citation type="submission" date="2008-11" db="PDB data bank">
        <title>Crystal structure of L-tyrosine decarboxylase MfnA (EC 4.1.1.25) (NP_247014.1) from Methanococcus jannaschii at 2.11 A resolution.</title>
        <authorList>
            <consortium name="Joint Center for Structural Genomics (JCSG)"/>
        </authorList>
    </citation>
    <scope>X-RAY CRYSTALLOGRAPHY (2.11 ANGSTROMS) IN COMPLEX WITH PYRIDOXAL PHOSPHATE</scope>
</reference>
<keyword id="KW-0002">3D-structure</keyword>
<keyword id="KW-0210">Decarboxylase</keyword>
<keyword id="KW-0456">Lyase</keyword>
<keyword id="KW-0663">Pyridoxal phosphate</keyword>
<keyword id="KW-1185">Reference proteome</keyword>
<organism>
    <name type="scientific">Methanocaldococcus jannaschii (strain ATCC 43067 / DSM 2661 / JAL-1 / JCM 10045 / NBRC 100440)</name>
    <name type="common">Methanococcus jannaschii</name>
    <dbReference type="NCBI Taxonomy" id="243232"/>
    <lineage>
        <taxon>Archaea</taxon>
        <taxon>Methanobacteriati</taxon>
        <taxon>Methanobacteriota</taxon>
        <taxon>Methanomada group</taxon>
        <taxon>Methanococci</taxon>
        <taxon>Methanococcales</taxon>
        <taxon>Methanocaldococcaceae</taxon>
        <taxon>Methanocaldococcus</taxon>
    </lineage>
</organism>
<evidence type="ECO:0000255" key="1">
    <source>
        <dbReference type="HAMAP-Rule" id="MF_01610"/>
    </source>
</evidence>
<evidence type="ECO:0000269" key="2">
    <source>
    </source>
</evidence>
<evidence type="ECO:0000269" key="3">
    <source>
    </source>
</evidence>
<evidence type="ECO:0000269" key="4">
    <source ref="4"/>
</evidence>
<evidence type="ECO:0000303" key="5">
    <source>
    </source>
</evidence>
<evidence type="ECO:0000305" key="6"/>
<evidence type="ECO:0007744" key="7">
    <source>
        <dbReference type="PDB" id="3F9T"/>
    </source>
</evidence>
<evidence type="ECO:0007829" key="8">
    <source>
        <dbReference type="PDB" id="3F9T"/>
    </source>
</evidence>
<evidence type="ECO:0007829" key="9">
    <source>
        <dbReference type="PDB" id="6JY1"/>
    </source>
</evidence>
<evidence type="ECO:0007829" key="10">
    <source>
        <dbReference type="PDB" id="6LDR"/>
    </source>
</evidence>
<name>MFNA_METJA</name>
<accession>Q60358</accession>
<feature type="chain" id="PRO_0000147023" description="L-tyrosine/L-aspartate decarboxylase">
    <location>
        <begin position="1"/>
        <end position="396"/>
    </location>
</feature>
<feature type="modified residue" description="N6-(pyridoxal phosphate)lysine" evidence="1 4">
    <location>
        <position position="245"/>
    </location>
</feature>
<feature type="helix" evidence="9">
    <location>
        <begin position="11"/>
        <end position="24"/>
    </location>
</feature>
<feature type="helix" evidence="9">
    <location>
        <begin position="28"/>
        <end position="30"/>
    </location>
</feature>
<feature type="helix" evidence="9">
    <location>
        <begin position="44"/>
        <end position="52"/>
    </location>
</feature>
<feature type="helix" evidence="9">
    <location>
        <begin position="60"/>
        <end position="62"/>
    </location>
</feature>
<feature type="helix" evidence="9">
    <location>
        <begin position="64"/>
        <end position="80"/>
    </location>
</feature>
<feature type="strand" evidence="9">
    <location>
        <begin position="87"/>
        <end position="92"/>
    </location>
</feature>
<feature type="helix" evidence="9">
    <location>
        <begin position="94"/>
        <end position="114"/>
    </location>
</feature>
<feature type="strand" evidence="9">
    <location>
        <begin position="124"/>
        <end position="128"/>
    </location>
</feature>
<feature type="helix" evidence="9">
    <location>
        <begin position="133"/>
        <end position="142"/>
    </location>
</feature>
<feature type="strand" evidence="9">
    <location>
        <begin position="145"/>
        <end position="149"/>
    </location>
</feature>
<feature type="strand" evidence="9">
    <location>
        <begin position="155"/>
        <end position="157"/>
    </location>
</feature>
<feature type="helix" evidence="9">
    <location>
        <begin position="159"/>
        <end position="168"/>
    </location>
</feature>
<feature type="strand" evidence="9">
    <location>
        <begin position="173"/>
        <end position="179"/>
    </location>
</feature>
<feature type="turn" evidence="9">
    <location>
        <begin position="181"/>
        <end position="183"/>
    </location>
</feature>
<feature type="helix" evidence="9">
    <location>
        <begin position="189"/>
        <end position="199"/>
    </location>
</feature>
<feature type="strand" evidence="9">
    <location>
        <begin position="202"/>
        <end position="206"/>
    </location>
</feature>
<feature type="helix" evidence="9">
    <location>
        <begin position="210"/>
        <end position="212"/>
    </location>
</feature>
<feature type="helix" evidence="9">
    <location>
        <begin position="214"/>
        <end position="216"/>
    </location>
</feature>
<feature type="helix" evidence="9">
    <location>
        <begin position="219"/>
        <end position="221"/>
    </location>
</feature>
<feature type="helix" evidence="9">
    <location>
        <begin position="232"/>
        <end position="234"/>
    </location>
</feature>
<feature type="strand" evidence="9">
    <location>
        <begin position="237"/>
        <end position="241"/>
    </location>
</feature>
<feature type="turn" evidence="10">
    <location>
        <begin position="243"/>
        <end position="247"/>
    </location>
</feature>
<feature type="strand" evidence="9">
    <location>
        <begin position="254"/>
        <end position="260"/>
    </location>
</feature>
<feature type="helix" evidence="9">
    <location>
        <begin position="261"/>
        <end position="267"/>
    </location>
</feature>
<feature type="strand" evidence="8">
    <location>
        <begin position="274"/>
        <end position="279"/>
    </location>
</feature>
<feature type="helix" evidence="9">
    <location>
        <begin position="289"/>
        <end position="326"/>
    </location>
</feature>
<feature type="strand" evidence="9">
    <location>
        <begin position="331"/>
        <end position="333"/>
    </location>
</feature>
<feature type="strand" evidence="9">
    <location>
        <begin position="336"/>
        <end position="343"/>
    </location>
</feature>
<feature type="helix" evidence="9">
    <location>
        <begin position="347"/>
        <end position="356"/>
    </location>
</feature>
<feature type="strand" evidence="9">
    <location>
        <begin position="365"/>
        <end position="373"/>
    </location>
</feature>
<feature type="helix" evidence="9">
    <location>
        <begin position="380"/>
        <end position="393"/>
    </location>
</feature>
<comment type="function">
    <text evidence="2 3">Catalyzes the decarboxylation of L-tyrosine to produce tyramine for methanofuran biosynthesis (PubMed:15715981). Can also catalyze the decarboxylation of L-aspartate to produce beta-alanine for coenzyme A (CoA) biosynthesis (PubMed:24891443).</text>
</comment>
<comment type="catalytic activity">
    <reaction evidence="1 2">
        <text>L-tyrosine + H(+) = tyramine + CO2</text>
        <dbReference type="Rhea" id="RHEA:14345"/>
        <dbReference type="ChEBI" id="CHEBI:15378"/>
        <dbReference type="ChEBI" id="CHEBI:16526"/>
        <dbReference type="ChEBI" id="CHEBI:58315"/>
        <dbReference type="ChEBI" id="CHEBI:327995"/>
        <dbReference type="EC" id="4.1.1.25"/>
    </reaction>
</comment>
<comment type="catalytic activity">
    <reaction evidence="1 3">
        <text>L-aspartate + H(+) = beta-alanine + CO2</text>
        <dbReference type="Rhea" id="RHEA:19497"/>
        <dbReference type="ChEBI" id="CHEBI:15378"/>
        <dbReference type="ChEBI" id="CHEBI:16526"/>
        <dbReference type="ChEBI" id="CHEBI:29991"/>
        <dbReference type="ChEBI" id="CHEBI:57966"/>
        <dbReference type="EC" id="4.1.1.11"/>
    </reaction>
</comment>
<comment type="cofactor">
    <cofactor evidence="1 2">
        <name>pyridoxal 5'-phosphate</name>
        <dbReference type="ChEBI" id="CHEBI:597326"/>
    </cofactor>
</comment>
<comment type="activity regulation">
    <text evidence="2">Inhibited by hydroxylamine and O-methylhydroxylamine.</text>
</comment>
<comment type="biophysicochemical properties">
    <kinetics>
        <KM evidence="2">1.6 mM for L-tyrosine</KM>
        <KM evidence="3">0.8 mM for L-aspartate</KM>
    </kinetics>
    <phDependence>
        <text evidence="2">Optimum pH is 7.5-8.5 for tyrosine decarboxylase activity.</text>
    </phDependence>
    <temperatureDependence>
        <text evidence="2">Thermostable. Retains full tyrosine decarboxylase activity after heating at 100 degrees Celsius for 10 minutes and 42% of its activity after 10 minutes at 110 degrees Celsius. Inactive after 10 minutes at 121 degrees Celsius.</text>
    </temperatureDependence>
</comment>
<comment type="pathway">
    <text evidence="1 2">Cofactor biosynthesis; methanofuran biosynthesis.</text>
</comment>
<comment type="pathway">
    <text evidence="1 3">Cofactor biosynthesis; coenzyme A biosynthesis.</text>
</comment>
<comment type="subunit">
    <text evidence="2">Homodimer.</text>
</comment>
<comment type="similarity">
    <text evidence="1">Belongs to the group II decarboxylase family. MfnA subfamily.</text>
</comment>